<organism>
    <name type="scientific">Escherichia fergusonii (strain ATCC 35469 / DSM 13698 / CCUG 18766 / IAM 14443 / JCM 21226 / LMG 7866 / NBRC 102419 / NCTC 12128 / CDC 0568-73)</name>
    <dbReference type="NCBI Taxonomy" id="585054"/>
    <lineage>
        <taxon>Bacteria</taxon>
        <taxon>Pseudomonadati</taxon>
        <taxon>Pseudomonadota</taxon>
        <taxon>Gammaproteobacteria</taxon>
        <taxon>Enterobacterales</taxon>
        <taxon>Enterobacteriaceae</taxon>
        <taxon>Escherichia</taxon>
    </lineage>
</organism>
<reference key="1">
    <citation type="journal article" date="2009" name="PLoS Genet.">
        <title>Organised genome dynamics in the Escherichia coli species results in highly diverse adaptive paths.</title>
        <authorList>
            <person name="Touchon M."/>
            <person name="Hoede C."/>
            <person name="Tenaillon O."/>
            <person name="Barbe V."/>
            <person name="Baeriswyl S."/>
            <person name="Bidet P."/>
            <person name="Bingen E."/>
            <person name="Bonacorsi S."/>
            <person name="Bouchier C."/>
            <person name="Bouvet O."/>
            <person name="Calteau A."/>
            <person name="Chiapello H."/>
            <person name="Clermont O."/>
            <person name="Cruveiller S."/>
            <person name="Danchin A."/>
            <person name="Diard M."/>
            <person name="Dossat C."/>
            <person name="Karoui M.E."/>
            <person name="Frapy E."/>
            <person name="Garry L."/>
            <person name="Ghigo J.M."/>
            <person name="Gilles A.M."/>
            <person name="Johnson J."/>
            <person name="Le Bouguenec C."/>
            <person name="Lescat M."/>
            <person name="Mangenot S."/>
            <person name="Martinez-Jehanne V."/>
            <person name="Matic I."/>
            <person name="Nassif X."/>
            <person name="Oztas S."/>
            <person name="Petit M.A."/>
            <person name="Pichon C."/>
            <person name="Rouy Z."/>
            <person name="Ruf C.S."/>
            <person name="Schneider D."/>
            <person name="Tourret J."/>
            <person name="Vacherie B."/>
            <person name="Vallenet D."/>
            <person name="Medigue C."/>
            <person name="Rocha E.P.C."/>
            <person name="Denamur E."/>
        </authorList>
    </citation>
    <scope>NUCLEOTIDE SEQUENCE [LARGE SCALE GENOMIC DNA]</scope>
    <source>
        <strain>ATCC 35469 / DSM 13698 / BCRC 15582 / CCUG 18766 / IAM 14443 / JCM 21226 / LMG 7866 / NBRC 102419 / NCTC 12128 / CDC 0568-73</strain>
    </source>
</reference>
<protein>
    <recommendedName>
        <fullName evidence="1">Bifunctional polymyxin resistance protein ArnA</fullName>
    </recommendedName>
    <domain>
        <recommendedName>
            <fullName evidence="1">UDP-4-amino-4-deoxy-L-arabinose formyltransferase</fullName>
            <ecNumber evidence="1">2.1.2.13</ecNumber>
        </recommendedName>
        <alternativeName>
            <fullName evidence="1">ArnAFT</fullName>
        </alternativeName>
        <alternativeName>
            <fullName evidence="1">UDP-L-Ara4N formyltransferase</fullName>
        </alternativeName>
    </domain>
    <domain>
        <recommendedName>
            <fullName evidence="1">UDP-glucuronic acid oxidase, UDP-4-keto-hexauronic acid decarboxylating</fullName>
            <ecNumber evidence="1">1.1.1.305</ecNumber>
        </recommendedName>
        <alternativeName>
            <fullName evidence="1">ArnADH</fullName>
        </alternativeName>
        <alternativeName>
            <fullName evidence="1">UDP-GlcUA decarboxylase</fullName>
        </alternativeName>
        <alternativeName>
            <fullName evidence="1">UDP-glucuronic acid dehydrogenase</fullName>
        </alternativeName>
    </domain>
</protein>
<proteinExistence type="inferred from homology"/>
<gene>
    <name evidence="1" type="primary">arnA</name>
    <name type="ordered locus">EFER_0914</name>
</gene>
<name>ARNA_ESCF3</name>
<feature type="chain" id="PRO_1000137942" description="Bifunctional polymyxin resistance protein ArnA">
    <location>
        <begin position="1"/>
        <end position="660"/>
    </location>
</feature>
<feature type="region of interest" description="Formyltransferase ArnAFT">
    <location>
        <begin position="1"/>
        <end position="304"/>
    </location>
</feature>
<feature type="region of interest" description="Dehydrogenase ArnADH">
    <location>
        <begin position="314"/>
        <end position="660"/>
    </location>
</feature>
<feature type="active site" description="Proton donor; for formyltransferase activity" evidence="1">
    <location>
        <position position="104"/>
    </location>
</feature>
<feature type="active site" description="Proton acceptor; for decarboxylase activity" evidence="1">
    <location>
        <position position="434"/>
    </location>
</feature>
<feature type="active site" description="Proton donor; for decarboxylase activity" evidence="1">
    <location>
        <position position="619"/>
    </location>
</feature>
<feature type="binding site" evidence="1">
    <location>
        <position position="114"/>
    </location>
    <ligand>
        <name>(6R)-10-formyltetrahydrofolate</name>
        <dbReference type="ChEBI" id="CHEBI:195366"/>
    </ligand>
</feature>
<feature type="binding site" evidence="1">
    <location>
        <begin position="136"/>
        <end position="140"/>
    </location>
    <ligand>
        <name>(6R)-10-formyltetrahydrofolate</name>
        <dbReference type="ChEBI" id="CHEBI:195366"/>
    </ligand>
</feature>
<feature type="binding site" evidence="1">
    <location>
        <position position="347"/>
    </location>
    <ligand>
        <name>NAD(+)</name>
        <dbReference type="ChEBI" id="CHEBI:57540"/>
    </ligand>
</feature>
<feature type="binding site" evidence="1">
    <location>
        <begin position="368"/>
        <end position="369"/>
    </location>
    <ligand>
        <name>NAD(+)</name>
        <dbReference type="ChEBI" id="CHEBI:57540"/>
    </ligand>
</feature>
<feature type="binding site" evidence="1">
    <location>
        <position position="393"/>
    </location>
    <ligand>
        <name>UDP-alpha-D-glucuronate</name>
        <dbReference type="ChEBI" id="CHEBI:58052"/>
    </ligand>
</feature>
<feature type="binding site" evidence="1">
    <location>
        <position position="398"/>
    </location>
    <ligand>
        <name>UDP-alpha-D-glucuronate</name>
        <dbReference type="ChEBI" id="CHEBI:58052"/>
    </ligand>
</feature>
<feature type="binding site" evidence="1">
    <location>
        <begin position="432"/>
        <end position="433"/>
    </location>
    <ligand>
        <name>UDP-alpha-D-glucuronate</name>
        <dbReference type="ChEBI" id="CHEBI:58052"/>
    </ligand>
</feature>
<feature type="binding site" evidence="1">
    <location>
        <position position="460"/>
    </location>
    <ligand>
        <name>UDP-alpha-D-glucuronate</name>
        <dbReference type="ChEBI" id="CHEBI:58052"/>
    </ligand>
</feature>
<feature type="binding site" evidence="1">
    <location>
        <position position="492"/>
    </location>
    <ligand>
        <name>UDP-alpha-D-glucuronate</name>
        <dbReference type="ChEBI" id="CHEBI:58052"/>
    </ligand>
</feature>
<feature type="binding site" evidence="1">
    <location>
        <begin position="526"/>
        <end position="535"/>
    </location>
    <ligand>
        <name>UDP-alpha-D-glucuronate</name>
        <dbReference type="ChEBI" id="CHEBI:58052"/>
    </ligand>
</feature>
<feature type="binding site" evidence="1">
    <location>
        <position position="613"/>
    </location>
    <ligand>
        <name>UDP-alpha-D-glucuronate</name>
        <dbReference type="ChEBI" id="CHEBI:58052"/>
    </ligand>
</feature>
<feature type="site" description="Transition state stabilizer" evidence="1">
    <location>
        <position position="102"/>
    </location>
</feature>
<feature type="site" description="Raises pKa of active site His" evidence="1">
    <location>
        <position position="140"/>
    </location>
</feature>
<sequence>MKAVVFAYHDMGCLGVQALLDAGYEISAIFTHADNPAEKVFYGSVSRLAALAGIPVYAPDDINHPLWVERIAQLAPDVIFSFYYRNLLNNEILKLAPHGAFNLHGSLLPKYRGRAPLNWVLENGENETGVTLHRMVAKADAGAIIAQQRVAIDPEDAALTLHKKLCQSASQMLEYALPAIKQGQTQETAQNESEATYFGRRKPEDSFLDWNKPATVLHNMVRAVADPWPGAFSYVGTQKFTIWSSRVHPRVNAAQPGSVISVAPFLIACGDGALEVITGQSVDGITMQGSQLAQTLGLVEGSRLNSQPVCTVQRRTRVLILGVNGFIGNHLTERLLREDHYEVYGLDIGSDAISRFLTHPNFHFVEGDISIHSEWIEYHIKKCDVVLPLVAIATPIEYTRNPLRVFELDFEENLRIIRYCVQYHKRIIFPSTSEVYGMCTDKFFDEDHSNLIVGPINKPRWIYSVSKQLLDRVIWAYGEKEGLQFTLFRPFNWMGPRLDNLNAARIGSSRAITQLILNLVEGSPIKLIDGGKQKRCFTDIRDGIEALYRIIENTGNRCDGEIINIGNPDNEASIEELGKMLLASFDKHPLRQHFPPFAGFRVVESSSYYGKGYQDVEHRKPSIRNARRCLDWEPTIDMQETIDETLDFFLRTVDIVEKSS</sequence>
<dbReference type="EC" id="2.1.2.13" evidence="1"/>
<dbReference type="EC" id="1.1.1.305" evidence="1"/>
<dbReference type="EMBL" id="CU928158">
    <property type="protein sequence ID" value="CAQ88449.1"/>
    <property type="molecule type" value="Genomic_DNA"/>
</dbReference>
<dbReference type="RefSeq" id="WP_000649100.1">
    <property type="nucleotide sequence ID" value="NC_011740.1"/>
</dbReference>
<dbReference type="SMR" id="B7LM76"/>
<dbReference type="GeneID" id="75058027"/>
<dbReference type="KEGG" id="efe:EFER_0914"/>
<dbReference type="HOGENOM" id="CLU_007383_23_2_6"/>
<dbReference type="OrthoDB" id="9802815at2"/>
<dbReference type="UniPathway" id="UPA00030"/>
<dbReference type="UniPathway" id="UPA00032">
    <property type="reaction ID" value="UER00492"/>
</dbReference>
<dbReference type="UniPathway" id="UPA00032">
    <property type="reaction ID" value="UER00494"/>
</dbReference>
<dbReference type="Proteomes" id="UP000000745">
    <property type="component" value="Chromosome"/>
</dbReference>
<dbReference type="GO" id="GO:0016020">
    <property type="term" value="C:membrane"/>
    <property type="evidence" value="ECO:0007669"/>
    <property type="project" value="GOC"/>
</dbReference>
<dbReference type="GO" id="GO:0016831">
    <property type="term" value="F:carboxy-lyase activity"/>
    <property type="evidence" value="ECO:0007669"/>
    <property type="project" value="InterPro"/>
</dbReference>
<dbReference type="GO" id="GO:0099619">
    <property type="term" value="F:UDP-4-amino-4-deoxy-L-arabinose formyltransferase activity"/>
    <property type="evidence" value="ECO:0007669"/>
    <property type="project" value="UniProtKB-EC"/>
</dbReference>
<dbReference type="GO" id="GO:0099618">
    <property type="term" value="F:UDP-glucuronate dehydrogenase activity"/>
    <property type="evidence" value="ECO:0007669"/>
    <property type="project" value="UniProtKB-EC"/>
</dbReference>
<dbReference type="GO" id="GO:0009245">
    <property type="term" value="P:lipid A biosynthetic process"/>
    <property type="evidence" value="ECO:0007669"/>
    <property type="project" value="UniProtKB-KW"/>
</dbReference>
<dbReference type="GO" id="GO:0009103">
    <property type="term" value="P:lipopolysaccharide biosynthetic process"/>
    <property type="evidence" value="ECO:0007669"/>
    <property type="project" value="UniProtKB-UniRule"/>
</dbReference>
<dbReference type="GO" id="GO:0046677">
    <property type="term" value="P:response to antibiotic"/>
    <property type="evidence" value="ECO:0007669"/>
    <property type="project" value="UniProtKB-KW"/>
</dbReference>
<dbReference type="CDD" id="cd08702">
    <property type="entry name" value="Arna_FMT_C"/>
    <property type="match status" value="1"/>
</dbReference>
<dbReference type="CDD" id="cd05257">
    <property type="entry name" value="Arna_like_SDR_e"/>
    <property type="match status" value="1"/>
</dbReference>
<dbReference type="FunFam" id="3.40.50.720:FF:000197">
    <property type="entry name" value="Bifunctional polymyxin resistance protein ArnA"/>
    <property type="match status" value="1"/>
</dbReference>
<dbReference type="Gene3D" id="3.40.50.12230">
    <property type="match status" value="1"/>
</dbReference>
<dbReference type="Gene3D" id="3.40.50.720">
    <property type="entry name" value="NAD(P)-binding Rossmann-like Domain"/>
    <property type="match status" value="1"/>
</dbReference>
<dbReference type="HAMAP" id="MF_01166">
    <property type="entry name" value="ArnA"/>
    <property type="match status" value="1"/>
</dbReference>
<dbReference type="InterPro" id="IPR045869">
    <property type="entry name" value="Arna-like_SDR_e"/>
</dbReference>
<dbReference type="InterPro" id="IPR021168">
    <property type="entry name" value="Bifun_polymyxin_resist_ArnA"/>
</dbReference>
<dbReference type="InterPro" id="IPR001509">
    <property type="entry name" value="Epimerase_deHydtase"/>
</dbReference>
<dbReference type="InterPro" id="IPR005793">
    <property type="entry name" value="Formyl_trans_C"/>
</dbReference>
<dbReference type="InterPro" id="IPR002376">
    <property type="entry name" value="Formyl_transf_N"/>
</dbReference>
<dbReference type="InterPro" id="IPR036477">
    <property type="entry name" value="Formyl_transf_N_sf"/>
</dbReference>
<dbReference type="InterPro" id="IPR011034">
    <property type="entry name" value="Formyl_transferase-like_C_sf"/>
</dbReference>
<dbReference type="InterPro" id="IPR050177">
    <property type="entry name" value="Lipid_A_modif_metabolic_enz"/>
</dbReference>
<dbReference type="InterPro" id="IPR036291">
    <property type="entry name" value="NAD(P)-bd_dom_sf"/>
</dbReference>
<dbReference type="NCBIfam" id="NF005414">
    <property type="entry name" value="PRK06988.1"/>
    <property type="match status" value="1"/>
</dbReference>
<dbReference type="NCBIfam" id="NF005998">
    <property type="entry name" value="PRK08125.1"/>
    <property type="match status" value="1"/>
</dbReference>
<dbReference type="NCBIfam" id="NF008872">
    <property type="entry name" value="PRK11908.1"/>
    <property type="match status" value="1"/>
</dbReference>
<dbReference type="PANTHER" id="PTHR43245">
    <property type="entry name" value="BIFUNCTIONAL POLYMYXIN RESISTANCE PROTEIN ARNA"/>
    <property type="match status" value="1"/>
</dbReference>
<dbReference type="PANTHER" id="PTHR43245:SF13">
    <property type="entry name" value="UDP-D-APIOSE_UDP-D-XYLOSE SYNTHASE 2"/>
    <property type="match status" value="1"/>
</dbReference>
<dbReference type="Pfam" id="PF01370">
    <property type="entry name" value="Epimerase"/>
    <property type="match status" value="1"/>
</dbReference>
<dbReference type="Pfam" id="PF02911">
    <property type="entry name" value="Formyl_trans_C"/>
    <property type="match status" value="1"/>
</dbReference>
<dbReference type="Pfam" id="PF00551">
    <property type="entry name" value="Formyl_trans_N"/>
    <property type="match status" value="1"/>
</dbReference>
<dbReference type="PIRSF" id="PIRSF036506">
    <property type="entry name" value="Bifun_polymyxin_resist_ArnA"/>
    <property type="match status" value="1"/>
</dbReference>
<dbReference type="SUPFAM" id="SSF50486">
    <property type="entry name" value="FMT C-terminal domain-like"/>
    <property type="match status" value="1"/>
</dbReference>
<dbReference type="SUPFAM" id="SSF53328">
    <property type="entry name" value="Formyltransferase"/>
    <property type="match status" value="1"/>
</dbReference>
<dbReference type="SUPFAM" id="SSF51735">
    <property type="entry name" value="NAD(P)-binding Rossmann-fold domains"/>
    <property type="match status" value="1"/>
</dbReference>
<accession>B7LM76</accession>
<comment type="function">
    <text evidence="1">Bifunctional enzyme that catalyzes the oxidative decarboxylation of UDP-glucuronic acid (UDP-GlcUA) to UDP-4-keto-arabinose (UDP-Ara4O) and the addition of a formyl group to UDP-4-amino-4-deoxy-L-arabinose (UDP-L-Ara4N) to form UDP-L-4-formamido-arabinose (UDP-L-Ara4FN). The modified arabinose is attached to lipid A and is required for resistance to polymyxin and cationic antimicrobial peptides.</text>
</comment>
<comment type="catalytic activity">
    <reaction evidence="1">
        <text>UDP-alpha-D-glucuronate + NAD(+) = UDP-beta-L-threo-pentopyranos-4-ulose + CO2 + NADH</text>
        <dbReference type="Rhea" id="RHEA:24702"/>
        <dbReference type="ChEBI" id="CHEBI:16526"/>
        <dbReference type="ChEBI" id="CHEBI:57540"/>
        <dbReference type="ChEBI" id="CHEBI:57945"/>
        <dbReference type="ChEBI" id="CHEBI:58052"/>
        <dbReference type="ChEBI" id="CHEBI:58710"/>
        <dbReference type="EC" id="1.1.1.305"/>
    </reaction>
</comment>
<comment type="catalytic activity">
    <reaction evidence="1">
        <text>UDP-4-amino-4-deoxy-beta-L-arabinose + (6R)-10-formyltetrahydrofolate = UDP-4-deoxy-4-formamido-beta-L-arabinose + (6S)-5,6,7,8-tetrahydrofolate + H(+)</text>
        <dbReference type="Rhea" id="RHEA:24706"/>
        <dbReference type="ChEBI" id="CHEBI:15378"/>
        <dbReference type="ChEBI" id="CHEBI:57453"/>
        <dbReference type="ChEBI" id="CHEBI:58708"/>
        <dbReference type="ChEBI" id="CHEBI:58709"/>
        <dbReference type="ChEBI" id="CHEBI:195366"/>
        <dbReference type="EC" id="2.1.2.13"/>
    </reaction>
</comment>
<comment type="pathway">
    <text evidence="1">Nucleotide-sugar biosynthesis; UDP-4-deoxy-4-formamido-beta-L-arabinose biosynthesis; UDP-4-deoxy-4-formamido-beta-L-arabinose from UDP-alpha-D-glucuronate: step 1/3.</text>
</comment>
<comment type="pathway">
    <text evidence="1">Nucleotide-sugar biosynthesis; UDP-4-deoxy-4-formamido-beta-L-arabinose biosynthesis; UDP-4-deoxy-4-formamido-beta-L-arabinose from UDP-alpha-D-glucuronate: step 3/3.</text>
</comment>
<comment type="pathway">
    <text evidence="1">Bacterial outer membrane biogenesis; lipopolysaccharide biosynthesis.</text>
</comment>
<comment type="subunit">
    <text evidence="1">Homohexamer, formed by a dimer of trimers.</text>
</comment>
<comment type="similarity">
    <text evidence="1">In the N-terminal section; belongs to the Fmt family. UDP-L-Ara4N formyltransferase subfamily.</text>
</comment>
<comment type="similarity">
    <text evidence="1">In the C-terminal section; belongs to the NAD(P)-dependent epimerase/dehydratase family. UDP-glucuronic acid decarboxylase subfamily.</text>
</comment>
<keyword id="KW-0046">Antibiotic resistance</keyword>
<keyword id="KW-0441">Lipid A biosynthesis</keyword>
<keyword id="KW-0444">Lipid biosynthesis</keyword>
<keyword id="KW-0443">Lipid metabolism</keyword>
<keyword id="KW-0448">Lipopolysaccharide biosynthesis</keyword>
<keyword id="KW-0511">Multifunctional enzyme</keyword>
<keyword id="KW-0520">NAD</keyword>
<keyword id="KW-0560">Oxidoreductase</keyword>
<keyword id="KW-0808">Transferase</keyword>
<evidence type="ECO:0000255" key="1">
    <source>
        <dbReference type="HAMAP-Rule" id="MF_01166"/>
    </source>
</evidence>